<accession>P38581</accession>
<sequence>MIKDEKINKIYALVKSALDNTDVKNDKKLSLLLMRIQETSINGELFYDYKKELQPAISMYSIQHNFRVPDDLVKLLALVQTPKAWSGF</sequence>
<reference key="1">
    <citation type="journal article" date="1994" name="J. Biol. Chem.">
        <title>Chemical and genetic characterization of bacteriocins produced by Carnobacterium piscicola LV17B.</title>
        <authorList>
            <person name="Quadri L.E.N."/>
            <person name="Sailer M."/>
            <person name="Roy K.L."/>
            <person name="Vederas J.C."/>
            <person name="Stiles M.E."/>
        </authorList>
    </citation>
    <scope>NUCLEOTIDE SEQUENCE [GENOMIC DNA]</scope>
    <source>
        <strain>LV17B</strain>
    </source>
</reference>
<name>CB1I_CARML</name>
<comment type="function">
    <text>Could impart immunity to carnobacteriocin-BM1 to naturally sensitive host strains.</text>
</comment>
<keyword id="KW-0079">Bacteriocin immunity</keyword>
<proteinExistence type="predicted"/>
<feature type="chain" id="PRO_0000206194" description="Putative carnobacteriocin-BM1 immunity protein">
    <location>
        <begin position="1"/>
        <end position="88"/>
    </location>
</feature>
<protein>
    <recommendedName>
        <fullName>Putative carnobacteriocin-BM1 immunity protein</fullName>
    </recommendedName>
</protein>
<dbReference type="EMBL" id="L29058">
    <property type="protein sequence ID" value="AAA23015.1"/>
    <property type="molecule type" value="Genomic_DNA"/>
</dbReference>
<dbReference type="PIR" id="B53589">
    <property type="entry name" value="B53589"/>
</dbReference>
<dbReference type="RefSeq" id="WP_010051996.1">
    <property type="nucleotide sequence ID" value="NZ_WNJS01000079.1"/>
</dbReference>
<dbReference type="SMR" id="P38581"/>
<dbReference type="PATRIC" id="fig|2751.33.peg.1518"/>
<dbReference type="GO" id="GO:0030153">
    <property type="term" value="P:bacteriocin immunity"/>
    <property type="evidence" value="ECO:0007669"/>
    <property type="project" value="UniProtKB-KW"/>
</dbReference>
<dbReference type="Gene3D" id="1.20.1440.50">
    <property type="entry name" value="Ta0600-like"/>
    <property type="match status" value="1"/>
</dbReference>
<dbReference type="InterPro" id="IPR023130">
    <property type="entry name" value="Ta0600-like_sf"/>
</dbReference>
<dbReference type="SUPFAM" id="SSF109797">
    <property type="entry name" value="Bacteriocin immunity protein-like"/>
    <property type="match status" value="1"/>
</dbReference>
<organism>
    <name type="scientific">Carnobacterium maltaromaticum</name>
    <name type="common">Carnobacterium piscicola</name>
    <dbReference type="NCBI Taxonomy" id="2751"/>
    <lineage>
        <taxon>Bacteria</taxon>
        <taxon>Bacillati</taxon>
        <taxon>Bacillota</taxon>
        <taxon>Bacilli</taxon>
        <taxon>Lactobacillales</taxon>
        <taxon>Carnobacteriaceae</taxon>
        <taxon>Carnobacterium</taxon>
    </lineage>
</organism>